<gene>
    <name evidence="1" type="primary">queC</name>
    <name type="ordered locus">NAMH_0791</name>
</gene>
<organism>
    <name type="scientific">Nautilia profundicola (strain ATCC BAA-1463 / DSM 18972 / AmH)</name>
    <dbReference type="NCBI Taxonomy" id="598659"/>
    <lineage>
        <taxon>Bacteria</taxon>
        <taxon>Pseudomonadati</taxon>
        <taxon>Campylobacterota</taxon>
        <taxon>Epsilonproteobacteria</taxon>
        <taxon>Nautiliales</taxon>
        <taxon>Nautiliaceae</taxon>
        <taxon>Nautilia</taxon>
    </lineage>
</organism>
<protein>
    <recommendedName>
        <fullName evidence="1">7-cyano-7-deazaguanine synthase</fullName>
        <ecNumber evidence="1">6.3.4.20</ecNumber>
    </recommendedName>
    <alternativeName>
        <fullName evidence="1">7-cyano-7-carbaguanine synthase</fullName>
    </alternativeName>
    <alternativeName>
        <fullName evidence="1">PreQ(0) synthase</fullName>
    </alternativeName>
    <alternativeName>
        <fullName evidence="1">Queuosine biosynthesis protein QueC</fullName>
    </alternativeName>
</protein>
<reference key="1">
    <citation type="journal article" date="2009" name="PLoS Genet.">
        <title>Adaptations to submarine hydrothermal environments exemplified by the genome of Nautilia profundicola.</title>
        <authorList>
            <person name="Campbell B.J."/>
            <person name="Smith J.L."/>
            <person name="Hanson T.E."/>
            <person name="Klotz M.G."/>
            <person name="Stein L.Y."/>
            <person name="Lee C.K."/>
            <person name="Wu D."/>
            <person name="Robinson J.M."/>
            <person name="Khouri H.M."/>
            <person name="Eisen J.A."/>
            <person name="Cary S.C."/>
        </authorList>
    </citation>
    <scope>NUCLEOTIDE SEQUENCE [LARGE SCALE GENOMIC DNA]</scope>
    <source>
        <strain>ATCC BAA-1463 / DSM 18972 / AmH</strain>
    </source>
</reference>
<sequence length="222" mass="24750">MKKAVVILSGGMDSTTAAFIAKSEGYEIIPVHFNYSQRTEKRELKAFNDICDYLNLDNRYIIDIPFFKQIGASALVDENIDVPVDGVKPGIPVTYVPFRNGIFLSIAAAVAEKEGAEAIYIGVVEEDSSGYPDCTEDFIQNMQKAVNSGTKPETNIEIKTPLVHLKKEDIVKTAVKYNVPLHLTWSCYKNEDEACGVCDSCRLRLKGFEKAGIEDRIPYKQK</sequence>
<evidence type="ECO:0000255" key="1">
    <source>
        <dbReference type="HAMAP-Rule" id="MF_01633"/>
    </source>
</evidence>
<feature type="chain" id="PRO_1000186614" description="7-cyano-7-deazaguanine synthase">
    <location>
        <begin position="1"/>
        <end position="222"/>
    </location>
</feature>
<feature type="binding site" evidence="1">
    <location>
        <begin position="8"/>
        <end position="18"/>
    </location>
    <ligand>
        <name>ATP</name>
        <dbReference type="ChEBI" id="CHEBI:30616"/>
    </ligand>
</feature>
<feature type="binding site" evidence="1">
    <location>
        <position position="187"/>
    </location>
    <ligand>
        <name>Zn(2+)</name>
        <dbReference type="ChEBI" id="CHEBI:29105"/>
    </ligand>
</feature>
<feature type="binding site" evidence="1">
    <location>
        <position position="195"/>
    </location>
    <ligand>
        <name>Zn(2+)</name>
        <dbReference type="ChEBI" id="CHEBI:29105"/>
    </ligand>
</feature>
<feature type="binding site" evidence="1">
    <location>
        <position position="198"/>
    </location>
    <ligand>
        <name>Zn(2+)</name>
        <dbReference type="ChEBI" id="CHEBI:29105"/>
    </ligand>
</feature>
<feature type="binding site" evidence="1">
    <location>
        <position position="201"/>
    </location>
    <ligand>
        <name>Zn(2+)</name>
        <dbReference type="ChEBI" id="CHEBI:29105"/>
    </ligand>
</feature>
<comment type="function">
    <text evidence="1">Catalyzes the ATP-dependent conversion of 7-carboxy-7-deazaguanine (CDG) to 7-cyano-7-deazaguanine (preQ(0)).</text>
</comment>
<comment type="catalytic activity">
    <reaction evidence="1">
        <text>7-carboxy-7-deazaguanine + NH4(+) + ATP = 7-cyano-7-deazaguanine + ADP + phosphate + H2O + H(+)</text>
        <dbReference type="Rhea" id="RHEA:27982"/>
        <dbReference type="ChEBI" id="CHEBI:15377"/>
        <dbReference type="ChEBI" id="CHEBI:15378"/>
        <dbReference type="ChEBI" id="CHEBI:28938"/>
        <dbReference type="ChEBI" id="CHEBI:30616"/>
        <dbReference type="ChEBI" id="CHEBI:43474"/>
        <dbReference type="ChEBI" id="CHEBI:45075"/>
        <dbReference type="ChEBI" id="CHEBI:61036"/>
        <dbReference type="ChEBI" id="CHEBI:456216"/>
        <dbReference type="EC" id="6.3.4.20"/>
    </reaction>
</comment>
<comment type="cofactor">
    <cofactor evidence="1">
        <name>Zn(2+)</name>
        <dbReference type="ChEBI" id="CHEBI:29105"/>
    </cofactor>
    <text evidence="1">Binds 1 zinc ion per subunit.</text>
</comment>
<comment type="pathway">
    <text evidence="1">Purine metabolism; 7-cyano-7-deazaguanine biosynthesis.</text>
</comment>
<comment type="similarity">
    <text evidence="1">Belongs to the QueC family.</text>
</comment>
<proteinExistence type="inferred from homology"/>
<dbReference type="EC" id="6.3.4.20" evidence="1"/>
<dbReference type="EMBL" id="CP001279">
    <property type="protein sequence ID" value="ACM92369.1"/>
    <property type="molecule type" value="Genomic_DNA"/>
</dbReference>
<dbReference type="RefSeq" id="WP_012663740.1">
    <property type="nucleotide sequence ID" value="NC_012115.1"/>
</dbReference>
<dbReference type="SMR" id="B9L986"/>
<dbReference type="STRING" id="598659.NAMH_0791"/>
<dbReference type="KEGG" id="nam:NAMH_0791"/>
<dbReference type="eggNOG" id="COG0603">
    <property type="taxonomic scope" value="Bacteria"/>
</dbReference>
<dbReference type="HOGENOM" id="CLU_081854_1_0_7"/>
<dbReference type="OrthoDB" id="9789567at2"/>
<dbReference type="UniPathway" id="UPA00391"/>
<dbReference type="Proteomes" id="UP000000448">
    <property type="component" value="Chromosome"/>
</dbReference>
<dbReference type="GO" id="GO:0005524">
    <property type="term" value="F:ATP binding"/>
    <property type="evidence" value="ECO:0007669"/>
    <property type="project" value="UniProtKB-UniRule"/>
</dbReference>
<dbReference type="GO" id="GO:0016879">
    <property type="term" value="F:ligase activity, forming carbon-nitrogen bonds"/>
    <property type="evidence" value="ECO:0007669"/>
    <property type="project" value="UniProtKB-UniRule"/>
</dbReference>
<dbReference type="GO" id="GO:0008270">
    <property type="term" value="F:zinc ion binding"/>
    <property type="evidence" value="ECO:0007669"/>
    <property type="project" value="UniProtKB-UniRule"/>
</dbReference>
<dbReference type="GO" id="GO:0008616">
    <property type="term" value="P:queuosine biosynthetic process"/>
    <property type="evidence" value="ECO:0007669"/>
    <property type="project" value="UniProtKB-UniRule"/>
</dbReference>
<dbReference type="CDD" id="cd01995">
    <property type="entry name" value="QueC-like"/>
    <property type="match status" value="1"/>
</dbReference>
<dbReference type="Gene3D" id="3.40.50.620">
    <property type="entry name" value="HUPs"/>
    <property type="match status" value="1"/>
</dbReference>
<dbReference type="HAMAP" id="MF_01633">
    <property type="entry name" value="QueC"/>
    <property type="match status" value="1"/>
</dbReference>
<dbReference type="InterPro" id="IPR018317">
    <property type="entry name" value="QueC"/>
</dbReference>
<dbReference type="InterPro" id="IPR014729">
    <property type="entry name" value="Rossmann-like_a/b/a_fold"/>
</dbReference>
<dbReference type="NCBIfam" id="TIGR00364">
    <property type="entry name" value="7-cyano-7-deazaguanine synthase QueC"/>
    <property type="match status" value="1"/>
</dbReference>
<dbReference type="PANTHER" id="PTHR42914">
    <property type="entry name" value="7-CYANO-7-DEAZAGUANINE SYNTHASE"/>
    <property type="match status" value="1"/>
</dbReference>
<dbReference type="PANTHER" id="PTHR42914:SF1">
    <property type="entry name" value="7-CYANO-7-DEAZAGUANINE SYNTHASE"/>
    <property type="match status" value="1"/>
</dbReference>
<dbReference type="Pfam" id="PF06508">
    <property type="entry name" value="QueC"/>
    <property type="match status" value="1"/>
</dbReference>
<dbReference type="PIRSF" id="PIRSF006293">
    <property type="entry name" value="ExsB"/>
    <property type="match status" value="1"/>
</dbReference>
<dbReference type="SUPFAM" id="SSF52402">
    <property type="entry name" value="Adenine nucleotide alpha hydrolases-like"/>
    <property type="match status" value="1"/>
</dbReference>
<name>QUEC_NAUPA</name>
<accession>B9L986</accession>
<keyword id="KW-0067">ATP-binding</keyword>
<keyword id="KW-0436">Ligase</keyword>
<keyword id="KW-0479">Metal-binding</keyword>
<keyword id="KW-0547">Nucleotide-binding</keyword>
<keyword id="KW-0671">Queuosine biosynthesis</keyword>
<keyword id="KW-0862">Zinc</keyword>